<dbReference type="EMBL" id="CP000749">
    <property type="protein sequence ID" value="ABR73133.1"/>
    <property type="molecule type" value="Genomic_DNA"/>
</dbReference>
<dbReference type="SMR" id="A6W354"/>
<dbReference type="STRING" id="400668.Mmwyl1_4238"/>
<dbReference type="KEGG" id="mmw:Mmwyl1_4238"/>
<dbReference type="eggNOG" id="COG0261">
    <property type="taxonomic scope" value="Bacteria"/>
</dbReference>
<dbReference type="HOGENOM" id="CLU_061463_3_2_6"/>
<dbReference type="OrthoDB" id="9813334at2"/>
<dbReference type="GO" id="GO:0005737">
    <property type="term" value="C:cytoplasm"/>
    <property type="evidence" value="ECO:0007669"/>
    <property type="project" value="UniProtKB-ARBA"/>
</dbReference>
<dbReference type="GO" id="GO:1990904">
    <property type="term" value="C:ribonucleoprotein complex"/>
    <property type="evidence" value="ECO:0007669"/>
    <property type="project" value="UniProtKB-KW"/>
</dbReference>
<dbReference type="GO" id="GO:0005840">
    <property type="term" value="C:ribosome"/>
    <property type="evidence" value="ECO:0007669"/>
    <property type="project" value="UniProtKB-KW"/>
</dbReference>
<dbReference type="GO" id="GO:0019843">
    <property type="term" value="F:rRNA binding"/>
    <property type="evidence" value="ECO:0007669"/>
    <property type="project" value="UniProtKB-UniRule"/>
</dbReference>
<dbReference type="GO" id="GO:0003735">
    <property type="term" value="F:structural constituent of ribosome"/>
    <property type="evidence" value="ECO:0007669"/>
    <property type="project" value="InterPro"/>
</dbReference>
<dbReference type="GO" id="GO:0006412">
    <property type="term" value="P:translation"/>
    <property type="evidence" value="ECO:0007669"/>
    <property type="project" value="UniProtKB-UniRule"/>
</dbReference>
<dbReference type="HAMAP" id="MF_01363">
    <property type="entry name" value="Ribosomal_bL21"/>
    <property type="match status" value="1"/>
</dbReference>
<dbReference type="InterPro" id="IPR028909">
    <property type="entry name" value="bL21-like"/>
</dbReference>
<dbReference type="InterPro" id="IPR036164">
    <property type="entry name" value="bL21-like_sf"/>
</dbReference>
<dbReference type="InterPro" id="IPR001787">
    <property type="entry name" value="Ribosomal_bL21"/>
</dbReference>
<dbReference type="InterPro" id="IPR018258">
    <property type="entry name" value="Ribosomal_bL21_CS"/>
</dbReference>
<dbReference type="NCBIfam" id="TIGR00061">
    <property type="entry name" value="L21"/>
    <property type="match status" value="1"/>
</dbReference>
<dbReference type="PANTHER" id="PTHR21349">
    <property type="entry name" value="50S RIBOSOMAL PROTEIN L21"/>
    <property type="match status" value="1"/>
</dbReference>
<dbReference type="PANTHER" id="PTHR21349:SF0">
    <property type="entry name" value="LARGE RIBOSOMAL SUBUNIT PROTEIN BL21M"/>
    <property type="match status" value="1"/>
</dbReference>
<dbReference type="Pfam" id="PF00829">
    <property type="entry name" value="Ribosomal_L21p"/>
    <property type="match status" value="1"/>
</dbReference>
<dbReference type="SUPFAM" id="SSF141091">
    <property type="entry name" value="L21p-like"/>
    <property type="match status" value="1"/>
</dbReference>
<dbReference type="PROSITE" id="PS01169">
    <property type="entry name" value="RIBOSOMAL_L21"/>
    <property type="match status" value="1"/>
</dbReference>
<keyword id="KW-0687">Ribonucleoprotein</keyword>
<keyword id="KW-0689">Ribosomal protein</keyword>
<keyword id="KW-0694">RNA-binding</keyword>
<keyword id="KW-0699">rRNA-binding</keyword>
<proteinExistence type="inferred from homology"/>
<name>RL21_MARMS</name>
<gene>
    <name evidence="1" type="primary">rplU</name>
    <name type="ordered locus">Mmwyl1_4238</name>
</gene>
<evidence type="ECO:0000255" key="1">
    <source>
        <dbReference type="HAMAP-Rule" id="MF_01363"/>
    </source>
</evidence>
<evidence type="ECO:0000305" key="2"/>
<feature type="chain" id="PRO_1000086986" description="Large ribosomal subunit protein bL21">
    <location>
        <begin position="1"/>
        <end position="102"/>
    </location>
</feature>
<reference key="1">
    <citation type="submission" date="2007-06" db="EMBL/GenBank/DDBJ databases">
        <title>Complete sequence of Marinomonas sp. MWYL1.</title>
        <authorList>
            <consortium name="US DOE Joint Genome Institute"/>
            <person name="Copeland A."/>
            <person name="Lucas S."/>
            <person name="Lapidus A."/>
            <person name="Barry K."/>
            <person name="Glavina del Rio T."/>
            <person name="Dalin E."/>
            <person name="Tice H."/>
            <person name="Pitluck S."/>
            <person name="Kiss H."/>
            <person name="Brettin T."/>
            <person name="Bruce D."/>
            <person name="Detter J.C."/>
            <person name="Han C."/>
            <person name="Schmutz J."/>
            <person name="Larimer F."/>
            <person name="Land M."/>
            <person name="Hauser L."/>
            <person name="Kyrpides N."/>
            <person name="Kim E."/>
            <person name="Johnston A.W.B."/>
            <person name="Todd J.D."/>
            <person name="Rogers R."/>
            <person name="Wexler M."/>
            <person name="Bond P.L."/>
            <person name="Li Y."/>
            <person name="Richardson P."/>
        </authorList>
    </citation>
    <scope>NUCLEOTIDE SEQUENCE [LARGE SCALE GENOMIC DNA]</scope>
    <source>
        <strain>MWYL1</strain>
    </source>
</reference>
<accession>A6W354</accession>
<organism>
    <name type="scientific">Marinomonas sp. (strain MWYL1)</name>
    <dbReference type="NCBI Taxonomy" id="400668"/>
    <lineage>
        <taxon>Bacteria</taxon>
        <taxon>Pseudomonadati</taxon>
        <taxon>Pseudomonadota</taxon>
        <taxon>Gammaproteobacteria</taxon>
        <taxon>Oceanospirillales</taxon>
        <taxon>Oceanospirillaceae</taxon>
        <taxon>Marinomonas</taxon>
    </lineage>
</organism>
<protein>
    <recommendedName>
        <fullName evidence="1">Large ribosomal subunit protein bL21</fullName>
    </recommendedName>
    <alternativeName>
        <fullName evidence="2">50S ribosomal protein L21</fullName>
    </alternativeName>
</protein>
<sequence length="102" mass="11335">MFAVIKTGGKQYRVEEGQTLKVEKLAVEEGGAIQFDDVLLVCNGDDVKVGAPVVEGAKVTAEVVAHGRGDKVKILKFRRRKHSMKRMGHRQWFTEVKITGIN</sequence>
<comment type="function">
    <text evidence="1">This protein binds to 23S rRNA in the presence of protein L20.</text>
</comment>
<comment type="subunit">
    <text evidence="1">Part of the 50S ribosomal subunit. Contacts protein L20.</text>
</comment>
<comment type="similarity">
    <text evidence="1">Belongs to the bacterial ribosomal protein bL21 family.</text>
</comment>